<protein>
    <recommendedName>
        <fullName>Nitrogen fixation protein FixH</fullName>
    </recommendedName>
</protein>
<name>FIXH_RHIME</name>
<proteinExistence type="predicted"/>
<feature type="chain" id="PRO_0000087260" description="Nitrogen fixation protein FixH">
    <location>
        <begin position="1"/>
        <end position="167"/>
    </location>
</feature>
<feature type="transmembrane region" description="Helical" evidence="1">
    <location>
        <begin position="19"/>
        <end position="39"/>
    </location>
</feature>
<evidence type="ECO:0000255" key="1"/>
<reference key="1">
    <citation type="journal article" date="1989" name="J. Bacteriol.">
        <title>Rhizobium meliloti fixGHI sequence predicts involvement of a specific cation pump in symbiotic nitrogen fixation.</title>
        <authorList>
            <person name="Kahn D."/>
            <person name="David M."/>
            <person name="Domergue O."/>
            <person name="Daveran M.-L."/>
            <person name="Ghai J."/>
            <person name="Hirsch P.R."/>
            <person name="Batut J."/>
        </authorList>
    </citation>
    <scope>NUCLEOTIDE SEQUENCE [GENOMIC DNA]</scope>
    <source>
        <strain>RCR2011 / SU47</strain>
    </source>
</reference>
<reference key="2">
    <citation type="journal article" date="2001" name="Proc. Natl. Acad. Sci. U.S.A.">
        <title>Nucleotide sequence and predicted functions of the entire Sinorhizobium meliloti pSymA megaplasmid.</title>
        <authorList>
            <person name="Barnett M.J."/>
            <person name="Fisher R.F."/>
            <person name="Jones T."/>
            <person name="Komp C."/>
            <person name="Abola A.P."/>
            <person name="Barloy-Hubler F."/>
            <person name="Bowser L."/>
            <person name="Capela D."/>
            <person name="Galibert F."/>
            <person name="Gouzy J."/>
            <person name="Gurjal M."/>
            <person name="Hong A."/>
            <person name="Huizar L."/>
            <person name="Hyman R.W."/>
            <person name="Kahn D."/>
            <person name="Kahn M.L."/>
            <person name="Kalman S."/>
            <person name="Keating D.H."/>
            <person name="Palm C."/>
            <person name="Peck M.C."/>
            <person name="Surzycki R."/>
            <person name="Wells D.H."/>
            <person name="Yeh K.-C."/>
            <person name="Davis R.W."/>
            <person name="Federspiel N.A."/>
            <person name="Long S.R."/>
        </authorList>
    </citation>
    <scope>NUCLEOTIDE SEQUENCE [LARGE SCALE GENOMIC DNA]</scope>
    <source>
        <strain>1021</strain>
    </source>
</reference>
<reference key="3">
    <citation type="journal article" date="2001" name="Science">
        <title>The composite genome of the legume symbiont Sinorhizobium meliloti.</title>
        <authorList>
            <person name="Galibert F."/>
            <person name="Finan T.M."/>
            <person name="Long S.R."/>
            <person name="Puehler A."/>
            <person name="Abola P."/>
            <person name="Ampe F."/>
            <person name="Barloy-Hubler F."/>
            <person name="Barnett M.J."/>
            <person name="Becker A."/>
            <person name="Boistard P."/>
            <person name="Bothe G."/>
            <person name="Boutry M."/>
            <person name="Bowser L."/>
            <person name="Buhrmester J."/>
            <person name="Cadieu E."/>
            <person name="Capela D."/>
            <person name="Chain P."/>
            <person name="Cowie A."/>
            <person name="Davis R.W."/>
            <person name="Dreano S."/>
            <person name="Federspiel N.A."/>
            <person name="Fisher R.F."/>
            <person name="Gloux S."/>
            <person name="Godrie T."/>
            <person name="Goffeau A."/>
            <person name="Golding B."/>
            <person name="Gouzy J."/>
            <person name="Gurjal M."/>
            <person name="Hernandez-Lucas I."/>
            <person name="Hong A."/>
            <person name="Huizar L."/>
            <person name="Hyman R.W."/>
            <person name="Jones T."/>
            <person name="Kahn D."/>
            <person name="Kahn M.L."/>
            <person name="Kalman S."/>
            <person name="Keating D.H."/>
            <person name="Kiss E."/>
            <person name="Komp C."/>
            <person name="Lelaure V."/>
            <person name="Masuy D."/>
            <person name="Palm C."/>
            <person name="Peck M.C."/>
            <person name="Pohl T.M."/>
            <person name="Portetelle D."/>
            <person name="Purnelle B."/>
            <person name="Ramsperger U."/>
            <person name="Surzycki R."/>
            <person name="Thebault P."/>
            <person name="Vandenbol M."/>
            <person name="Vorhoelter F.J."/>
            <person name="Weidner S."/>
            <person name="Wells D.H."/>
            <person name="Wong K."/>
            <person name="Yeh K.-C."/>
            <person name="Batut J."/>
        </authorList>
    </citation>
    <scope>NUCLEOTIDE SEQUENCE [LARGE SCALE GENOMIC DNA]</scope>
    <source>
        <strain>1021</strain>
    </source>
</reference>
<organism>
    <name type="scientific">Rhizobium meliloti (strain 1021)</name>
    <name type="common">Ensifer meliloti</name>
    <name type="synonym">Sinorhizobium meliloti</name>
    <dbReference type="NCBI Taxonomy" id="266834"/>
    <lineage>
        <taxon>Bacteria</taxon>
        <taxon>Pseudomonadati</taxon>
        <taxon>Pseudomonadota</taxon>
        <taxon>Alphaproteobacteria</taxon>
        <taxon>Hyphomicrobiales</taxon>
        <taxon>Rhizobiaceae</taxon>
        <taxon>Sinorhizobium/Ensifer group</taxon>
        <taxon>Sinorhizobium</taxon>
    </lineage>
</organism>
<sequence>MSTATKQRSPKRGFTGWHMVAVMSLFFGTVISVNLVMAWNASRSWSGLVVENTYVASQQFNGKVAEGRAFQASGIKGRLTTEPGAIRYVLTRNGEPEQKIDKVIAVLKRPVEEHEDLRVELHPRGEGAFVLAEELKPGQWIAAMMAMAGDAVVHRQTIRFIAEGRDK</sequence>
<geneLocation type="plasmid">
    <name>pSymA</name>
    <name>megaplasmid 1</name>
</geneLocation>
<gene>
    <name type="primary">fixH</name>
    <name type="ordered locus">RA0660</name>
    <name type="ORF">SMa1210</name>
</gene>
<keyword id="KW-1003">Cell membrane</keyword>
<keyword id="KW-0472">Membrane</keyword>
<keyword id="KW-0535">Nitrogen fixation</keyword>
<keyword id="KW-0614">Plasmid</keyword>
<keyword id="KW-1185">Reference proteome</keyword>
<keyword id="KW-0812">Transmembrane</keyword>
<keyword id="KW-1133">Transmembrane helix</keyword>
<accession>P18397</accession>
<comment type="function">
    <text>The four proteins FixG, FixH, FixI, and FixS may participate in a membrane-bound complex coupling the FixI cation pump with a redox process catalyzed by FixG.</text>
</comment>
<comment type="subcellular location">
    <subcellularLocation>
        <location>Cell membrane</location>
    </subcellularLocation>
</comment>
<dbReference type="EMBL" id="Z21854">
    <property type="protein sequence ID" value="CAA79906.1"/>
    <property type="molecule type" value="Genomic_DNA"/>
</dbReference>
<dbReference type="EMBL" id="AE006469">
    <property type="protein sequence ID" value="AAK65318.1"/>
    <property type="molecule type" value="Genomic_DNA"/>
</dbReference>
<dbReference type="PIR" id="B32052">
    <property type="entry name" value="B32052"/>
</dbReference>
<dbReference type="PIR" id="D95344">
    <property type="entry name" value="D95344"/>
</dbReference>
<dbReference type="RefSeq" id="NP_435906.1">
    <property type="nucleotide sequence ID" value="NC_003037.1"/>
</dbReference>
<dbReference type="RefSeq" id="WP_010967639.1">
    <property type="nucleotide sequence ID" value="NC_003037.1"/>
</dbReference>
<dbReference type="SMR" id="P18397"/>
<dbReference type="EnsemblBacteria" id="AAK65318">
    <property type="protein sequence ID" value="AAK65318"/>
    <property type="gene ID" value="SMa1210"/>
</dbReference>
<dbReference type="KEGG" id="sme:SMa1210"/>
<dbReference type="PATRIC" id="fig|266834.11.peg.680"/>
<dbReference type="HOGENOM" id="CLU_111458_2_0_5"/>
<dbReference type="OrthoDB" id="1495896at2"/>
<dbReference type="PRO" id="PR:P18397"/>
<dbReference type="Proteomes" id="UP000001976">
    <property type="component" value="Plasmid pSymA"/>
</dbReference>
<dbReference type="GO" id="GO:0005886">
    <property type="term" value="C:plasma membrane"/>
    <property type="evidence" value="ECO:0007669"/>
    <property type="project" value="UniProtKB-SubCell"/>
</dbReference>
<dbReference type="GO" id="GO:0009399">
    <property type="term" value="P:nitrogen fixation"/>
    <property type="evidence" value="ECO:0007669"/>
    <property type="project" value="UniProtKB-KW"/>
</dbReference>
<dbReference type="InterPro" id="IPR008620">
    <property type="entry name" value="FixH"/>
</dbReference>
<dbReference type="InterPro" id="IPR018037">
    <property type="entry name" value="FixH_proteobacterial"/>
</dbReference>
<dbReference type="Pfam" id="PF05751">
    <property type="entry name" value="FixH"/>
    <property type="match status" value="1"/>
</dbReference>
<dbReference type="PIRSF" id="PIRSF011386">
    <property type="entry name" value="FixH"/>
    <property type="match status" value="1"/>
</dbReference>